<dbReference type="EMBL" id="BC141763">
    <property type="protein sequence ID" value="AAI41764.1"/>
    <property type="molecule type" value="mRNA"/>
</dbReference>
<dbReference type="RefSeq" id="NP_001092176.1">
    <property type="nucleotide sequence ID" value="NM_001098706.1"/>
</dbReference>
<dbReference type="SMR" id="A5D8P8"/>
<dbReference type="GeneID" id="100049769"/>
<dbReference type="KEGG" id="xla:100049769"/>
<dbReference type="AGR" id="Xenbase:XB-GENE-6078962"/>
<dbReference type="CTD" id="100049769"/>
<dbReference type="Xenbase" id="XB-GENE-6078962">
    <property type="gene designation" value="emc10.L"/>
</dbReference>
<dbReference type="OrthoDB" id="1894652at2759"/>
<dbReference type="Proteomes" id="UP000186698">
    <property type="component" value="Chromosome 7L"/>
</dbReference>
<dbReference type="Bgee" id="100049769">
    <property type="expression patterns" value="Expressed in testis and 20 other cell types or tissues"/>
</dbReference>
<dbReference type="GO" id="GO:0072546">
    <property type="term" value="C:EMC complex"/>
    <property type="evidence" value="ECO:0000250"/>
    <property type="project" value="UniProtKB"/>
</dbReference>
<dbReference type="GO" id="GO:0005789">
    <property type="term" value="C:endoplasmic reticulum membrane"/>
    <property type="evidence" value="ECO:0000250"/>
    <property type="project" value="UniProtKB"/>
</dbReference>
<dbReference type="GO" id="GO:0016020">
    <property type="term" value="C:membrane"/>
    <property type="evidence" value="ECO:0000250"/>
    <property type="project" value="UniProtKB"/>
</dbReference>
<dbReference type="GO" id="GO:0045050">
    <property type="term" value="P:protein insertion into ER membrane by stop-transfer membrane-anchor sequence"/>
    <property type="evidence" value="ECO:0000250"/>
    <property type="project" value="UniProtKB"/>
</dbReference>
<dbReference type="GO" id="GO:0071816">
    <property type="term" value="P:tail-anchored membrane protein insertion into ER membrane"/>
    <property type="evidence" value="ECO:0000250"/>
    <property type="project" value="UniProtKB"/>
</dbReference>
<dbReference type="CDD" id="cd22209">
    <property type="entry name" value="EMC10"/>
    <property type="match status" value="1"/>
</dbReference>
<dbReference type="PANTHER" id="PTHR21397">
    <property type="entry name" value="CHROMATIN COMPLEXES SUBUNIT BAP18-RELATED"/>
    <property type="match status" value="1"/>
</dbReference>
<dbReference type="PANTHER" id="PTHR21397:SF4">
    <property type="entry name" value="ER MEMBRANE PROTEIN COMPLEX SUBUNIT 10"/>
    <property type="match status" value="1"/>
</dbReference>
<dbReference type="Pfam" id="PF21203">
    <property type="entry name" value="ECM10"/>
    <property type="match status" value="1"/>
</dbReference>
<reference key="1">
    <citation type="submission" date="2007-05" db="EMBL/GenBank/DDBJ databases">
        <authorList>
            <consortium name="NIH - Xenopus Gene Collection (XGC) project"/>
        </authorList>
    </citation>
    <scope>NUCLEOTIDE SEQUENCE [LARGE SCALE MRNA]</scope>
    <source>
        <tissue>Fat body</tissue>
    </source>
</reference>
<proteinExistence type="evidence at transcript level"/>
<comment type="function">
    <text evidence="1">Part of the endoplasmic reticulum membrane protein complex (EMC) that enables the energy-independent insertion into endoplasmic reticulum membranes of newly synthesized membrane proteins. Preferentially accommodates proteins with transmembrane domains that are weakly hydrophobic or contain destabilizing features such as charged and aromatic residues. Involved in the cotranslational insertion of multi-pass membrane proteins in which stop-transfer membrane-anchor sequences become ER membrane spanning helices. It is also required for the post-translational insertion of tail-anchored/TA proteins in endoplasmic reticulum membranes. By mediating the proper cotranslational insertion of N-terminal transmembrane domains in an N-exo topology, with translocated N-terminus in the lumen of the ER, controls the topology of multi-pass membrane proteins like the G protein-coupled receptors. By regulating the insertion of various proteins in membranes, it is indirectly involved in many cellular processes. Promotes angiogenesis and tissue repair in the heart after myocardial infarction. Stimulates cardiac endothelial cell migration and outgrowth via the activation of p38 MAPK, PAK and MAPK2 signaling pathways.</text>
</comment>
<comment type="subunit">
    <text evidence="1">Component of the ER membrane protein complex (EMC).</text>
</comment>
<comment type="subcellular location">
    <subcellularLocation>
        <location evidence="1">Endoplasmic reticulum membrane</location>
        <topology evidence="1">Single-pass type I membrane protein</topology>
    </subcellularLocation>
</comment>
<comment type="similarity">
    <text evidence="3">Belongs to the EMC10 family.</text>
</comment>
<protein>
    <recommendedName>
        <fullName>ER membrane protein complex subunit 10</fullName>
    </recommendedName>
</protein>
<feature type="signal peptide" evidence="1">
    <location>
        <begin position="1"/>
        <end position="38"/>
    </location>
</feature>
<feature type="chain" id="PRO_0000315052" description="ER membrane protein complex subunit 10">
    <location>
        <begin position="39"/>
        <end position="267"/>
    </location>
</feature>
<feature type="topological domain" description="Lumenal" evidence="1">
    <location>
        <begin position="39"/>
        <end position="226"/>
    </location>
</feature>
<feature type="transmembrane region" description="Helical" evidence="2">
    <location>
        <begin position="227"/>
        <end position="247"/>
    </location>
</feature>
<feature type="topological domain" description="Cytoplasmic" evidence="1">
    <location>
        <begin position="248"/>
        <end position="267"/>
    </location>
</feature>
<name>EMC10_XENLA</name>
<sequence length="267" mass="28642">MAAGCLGGQRAGPLSGTVLGNRWAWLIALPLLLAAAAAQGSVCRLKTGDGRESESCGTNLELEHSFELDDSIDFKKRGSLFWSGTAEQSISILQKQLTEDERNKLRDIANLNGLYRIRIPRKLGISEEVNEYVTSFVRACSMVESHLSDEITVHTDISGNVIGVSIVTFPGSCNGAEVEDVDLEMFNTTVHIQQPIAAAVPETAAFIERLEMEQAQKAKNPQEQKSFFAKYWMYIIPVVLFLMMSGASDAGNQGGNGGGGGGGGGGR</sequence>
<evidence type="ECO:0000250" key="1">
    <source>
        <dbReference type="UniProtKB" id="Q5UCC4"/>
    </source>
</evidence>
<evidence type="ECO:0000255" key="2"/>
<evidence type="ECO:0000305" key="3"/>
<gene>
    <name type="primary">emc10</name>
</gene>
<organism>
    <name type="scientific">Xenopus laevis</name>
    <name type="common">African clawed frog</name>
    <dbReference type="NCBI Taxonomy" id="8355"/>
    <lineage>
        <taxon>Eukaryota</taxon>
        <taxon>Metazoa</taxon>
        <taxon>Chordata</taxon>
        <taxon>Craniata</taxon>
        <taxon>Vertebrata</taxon>
        <taxon>Euteleostomi</taxon>
        <taxon>Amphibia</taxon>
        <taxon>Batrachia</taxon>
        <taxon>Anura</taxon>
        <taxon>Pipoidea</taxon>
        <taxon>Pipidae</taxon>
        <taxon>Xenopodinae</taxon>
        <taxon>Xenopus</taxon>
        <taxon>Xenopus</taxon>
    </lineage>
</organism>
<accession>A5D8P8</accession>
<keyword id="KW-0256">Endoplasmic reticulum</keyword>
<keyword id="KW-0472">Membrane</keyword>
<keyword id="KW-1185">Reference proteome</keyword>
<keyword id="KW-0732">Signal</keyword>
<keyword id="KW-0812">Transmembrane</keyword>
<keyword id="KW-1133">Transmembrane helix</keyword>